<comment type="function">
    <text evidence="4 5">Part of a complex that catalyzes the reversible reduction of CoM-S-S-CoB to the thiol-coenzymes H-S-CoM (coenzyme M) and H-S-CoB (coenzyme B).</text>
</comment>
<comment type="catalytic activity">
    <reaction evidence="5">
        <text>coenzyme B + coenzyme M + 2 reduced [2Fe-2S]-[ferredoxin] + 2 H(+) = coenzyme M-coenzyme B heterodisulfide + 2 H2 + 2 oxidized [2Fe-2S]-[ferredoxin]</text>
        <dbReference type="Rhea" id="RHEA:55748"/>
        <dbReference type="Rhea" id="RHEA-COMP:10000"/>
        <dbReference type="Rhea" id="RHEA-COMP:10001"/>
        <dbReference type="ChEBI" id="CHEBI:15378"/>
        <dbReference type="ChEBI" id="CHEBI:18276"/>
        <dbReference type="ChEBI" id="CHEBI:33737"/>
        <dbReference type="ChEBI" id="CHEBI:33738"/>
        <dbReference type="ChEBI" id="CHEBI:58319"/>
        <dbReference type="ChEBI" id="CHEBI:58411"/>
        <dbReference type="ChEBI" id="CHEBI:58596"/>
        <dbReference type="EC" id="1.8.98.5"/>
    </reaction>
</comment>
<comment type="catalytic activity">
    <reaction evidence="4 5">
        <text>coenzyme B + coenzyme M + 2 reduced [2Fe-2S]-[ferredoxin] + 2 CO2 = coenzyme M-coenzyme B heterodisulfide + 2 formate + 2 oxidized [2Fe-2S]-[ferredoxin]</text>
        <dbReference type="Rhea" id="RHEA:55752"/>
        <dbReference type="Rhea" id="RHEA-COMP:10000"/>
        <dbReference type="Rhea" id="RHEA-COMP:10001"/>
        <dbReference type="ChEBI" id="CHEBI:15740"/>
        <dbReference type="ChEBI" id="CHEBI:16526"/>
        <dbReference type="ChEBI" id="CHEBI:33737"/>
        <dbReference type="ChEBI" id="CHEBI:33738"/>
        <dbReference type="ChEBI" id="CHEBI:58319"/>
        <dbReference type="ChEBI" id="CHEBI:58411"/>
        <dbReference type="ChEBI" id="CHEBI:58596"/>
        <dbReference type="EC" id="1.8.98.6"/>
    </reaction>
</comment>
<comment type="cofactor">
    <cofactor evidence="3">
        <name>[4Fe-4S] cluster</name>
        <dbReference type="ChEBI" id="CHEBI:49883"/>
    </cofactor>
    <text evidence="3">Binds 4 [4Fe-4S] clusters per subunit.</text>
</comment>
<comment type="cofactor">
    <cofactor evidence="1">
        <name>FAD</name>
        <dbReference type="ChEBI" id="CHEBI:57692"/>
    </cofactor>
</comment>
<comment type="pathway">
    <text evidence="6">Cofactor metabolism; coenzyme M-coenzyme B heterodisulfide reduction; coenzyme B and coenzyme M from coenzyme M-coenzyme B heterodisulfide: step 1/1.</text>
</comment>
<comment type="subunit">
    <text evidence="4 5">The heterodisulfide reductase is composed of three subunits; HdrA, HdrB and HdrC. B1 and B2 subunits are interchangeable, as are the C1 and C2 subunits. The heterodisulfide reductase forms a supercomplex with formylmethanofuran dehydrogenase (Fwd), F(420)-non-reducing hydrogenase (Vhu) and formate dehydrogenase (Fdh).</text>
</comment>
<comment type="similarity">
    <text evidence="6">Belongs to the HdrA family.</text>
</comment>
<feature type="chain" id="PRO_0000318646" description="H(2)/formate:CoB-CoM heterodisulfide,ferredoxin reductase subunit A">
    <location>
        <begin position="1"/>
        <end position="658"/>
    </location>
</feature>
<feature type="domain" description="4Fe-4S ferredoxin-type 1" evidence="3">
    <location>
        <begin position="236"/>
        <end position="267"/>
    </location>
</feature>
<feature type="domain" description="4Fe-4S ferredoxin-type 2" evidence="3">
    <location>
        <begin position="284"/>
        <end position="313"/>
    </location>
</feature>
<feature type="domain" description="4Fe-4S ferredoxin-type 3" evidence="3">
    <location>
        <begin position="575"/>
        <end position="604"/>
    </location>
</feature>
<feature type="domain" description="4Fe-4S ferredoxin-type 4" evidence="3">
    <location>
        <begin position="607"/>
        <end position="637"/>
    </location>
</feature>
<feature type="binding site" evidence="2">
    <location>
        <begin position="150"/>
        <end position="173"/>
    </location>
    <ligand>
        <name>FAD</name>
        <dbReference type="ChEBI" id="CHEBI:57692"/>
    </ligand>
</feature>
<feature type="binding site" evidence="3">
    <location>
        <position position="246"/>
    </location>
    <ligand>
        <name>[4Fe-4S] cluster</name>
        <dbReference type="ChEBI" id="CHEBI:49883"/>
        <label>1</label>
    </ligand>
</feature>
<feature type="binding site" evidence="3">
    <location>
        <position position="249"/>
    </location>
    <ligand>
        <name>[4Fe-4S] cluster</name>
        <dbReference type="ChEBI" id="CHEBI:49883"/>
        <label>1</label>
    </ligand>
</feature>
<feature type="binding site" evidence="3">
    <location>
        <position position="252"/>
    </location>
    <ligand>
        <name>[4Fe-4S] cluster</name>
        <dbReference type="ChEBI" id="CHEBI:49883"/>
        <label>1</label>
    </ligand>
</feature>
<feature type="binding site" evidence="3">
    <location>
        <position position="256"/>
    </location>
    <ligand>
        <name>[4Fe-4S] cluster</name>
        <dbReference type="ChEBI" id="CHEBI:49883"/>
        <label>2</label>
    </ligand>
</feature>
<feature type="binding site" evidence="3">
    <location>
        <position position="293"/>
    </location>
    <ligand>
        <name>[4Fe-4S] cluster</name>
        <dbReference type="ChEBI" id="CHEBI:49883"/>
        <label>2</label>
    </ligand>
</feature>
<feature type="binding site" evidence="3">
    <location>
        <position position="296"/>
    </location>
    <ligand>
        <name>[4Fe-4S] cluster</name>
        <dbReference type="ChEBI" id="CHEBI:49883"/>
        <label>2</label>
    </ligand>
</feature>
<feature type="binding site" evidence="3">
    <location>
        <position position="299"/>
    </location>
    <ligand>
        <name>[4Fe-4S] cluster</name>
        <dbReference type="ChEBI" id="CHEBI:49883"/>
        <label>2</label>
    </ligand>
</feature>
<feature type="binding site" evidence="3">
    <location>
        <position position="303"/>
    </location>
    <ligand>
        <name>[4Fe-4S] cluster</name>
        <dbReference type="ChEBI" id="CHEBI:49883"/>
        <label>1</label>
    </ligand>
</feature>
<feature type="binding site" evidence="3">
    <location>
        <position position="584"/>
    </location>
    <ligand>
        <name>[4Fe-4S] cluster</name>
        <dbReference type="ChEBI" id="CHEBI:49883"/>
        <label>3</label>
    </ligand>
</feature>
<feature type="binding site" evidence="3">
    <location>
        <position position="587"/>
    </location>
    <ligand>
        <name>[4Fe-4S] cluster</name>
        <dbReference type="ChEBI" id="CHEBI:49883"/>
        <label>3</label>
    </ligand>
</feature>
<feature type="binding site" evidence="3">
    <location>
        <position position="590"/>
    </location>
    <ligand>
        <name>[4Fe-4S] cluster</name>
        <dbReference type="ChEBI" id="CHEBI:49883"/>
        <label>3</label>
    </ligand>
</feature>
<feature type="binding site" evidence="3">
    <location>
        <position position="594"/>
    </location>
    <ligand>
        <name>[4Fe-4S] cluster</name>
        <dbReference type="ChEBI" id="CHEBI:49883"/>
        <label>4</label>
    </ligand>
</feature>
<feature type="binding site" evidence="3">
    <location>
        <position position="617"/>
    </location>
    <ligand>
        <name>[4Fe-4S] cluster</name>
        <dbReference type="ChEBI" id="CHEBI:49883"/>
        <label>4</label>
    </ligand>
</feature>
<feature type="binding site" evidence="3">
    <location>
        <position position="620"/>
    </location>
    <ligand>
        <name>[4Fe-4S] cluster</name>
        <dbReference type="ChEBI" id="CHEBI:49883"/>
        <label>4</label>
    </ligand>
</feature>
<feature type="binding site" evidence="3">
    <location>
        <position position="623"/>
    </location>
    <ligand>
        <name>[4Fe-4S] cluster</name>
        <dbReference type="ChEBI" id="CHEBI:49883"/>
        <label>4</label>
    </ligand>
</feature>
<feature type="binding site" evidence="3">
    <location>
        <position position="627"/>
    </location>
    <ligand>
        <name>[4Fe-4S] cluster</name>
        <dbReference type="ChEBI" id="CHEBI:49883"/>
        <label>3</label>
    </ligand>
</feature>
<feature type="non-standard amino acid" description="Selenocysteine" evidence="6">
    <location>
        <position position="197"/>
    </location>
</feature>
<organism>
    <name type="scientific">Methanococcus maripaludis (strain DSM 14266 / JCM 13030 / NBRC 101832 / S2 / LL)</name>
    <dbReference type="NCBI Taxonomy" id="267377"/>
    <lineage>
        <taxon>Archaea</taxon>
        <taxon>Methanobacteriati</taxon>
        <taxon>Methanobacteriota</taxon>
        <taxon>Methanomada group</taxon>
        <taxon>Methanococci</taxon>
        <taxon>Methanococcales</taxon>
        <taxon>Methanococcaceae</taxon>
        <taxon>Methanococcus</taxon>
    </lineage>
</organism>
<sequence>MSDPKVGVFVCYCGANINGAVDCEAVKDFASELDGVAVAATYPFMCADPGQGLIKDAIKEHGLDRIVVAACTPKIHEPTFRGCLQDAGISPYYLEFVNIREHDAFVHMGDVEGATRKACEMIAGGVERAKKLEDVPQKVVDVDKSCMVIGAGIAGIQSALDLGDQGFKVYLVDKDESIGGRMAQLAKTFPTDDCAMUILAPKMVSAANHPNIELITFAEIKNIDGYIGNFDVTLEKKPRYVDEDTCTGCGACAAACPIEVPNEFDLGLGTRKAIYVPFPQAVPLLYTIDKEHCIDCGLCAKVCCAEAVRYDQKPQELNIKVGTIITATGYDEFDATKKEEYGYGVYDNVITTLEVERMINPAGPTHGHEIRPSDGKAPKRTVYIQCVGSRDEKVGNPYCSRVCCMFALKNAQLMKMHDPNAEVYICYMDIRAFGKGYEEYYKRAQDQFGVKFIRGRPANIFEDPETKNLTVRVEDTLMGEILEIDADLVVLSAGLEAKKDAGELAKMLGIDRGPEGFFKELHPKLAPVNTKVDGIAIAGVAQGPKDIPDTVAQAKGAASAVAIPMSQGQFKIEMIRATVNEEVCGGCKVCALMCPYNAITYEEKDGHLVAITDDVACKGCGACAAACPSGAMQLRYYRDEQVIGMIDGILNAAKMLEE</sequence>
<reference key="1">
    <citation type="journal article" date="2004" name="J. Bacteriol.">
        <title>Complete genome sequence of the genetically tractable hydrogenotrophic methanogen Methanococcus maripaludis.</title>
        <authorList>
            <person name="Hendrickson E.L."/>
            <person name="Kaul R."/>
            <person name="Zhou Y."/>
            <person name="Bovee D."/>
            <person name="Chapman P."/>
            <person name="Chung J."/>
            <person name="Conway de Macario E."/>
            <person name="Dodsworth J.A."/>
            <person name="Gillett W."/>
            <person name="Graham D.E."/>
            <person name="Hackett M."/>
            <person name="Haydock A.K."/>
            <person name="Kang A."/>
            <person name="Land M.L."/>
            <person name="Levy R."/>
            <person name="Lie T.J."/>
            <person name="Major T.A."/>
            <person name="Moore B.C."/>
            <person name="Porat I."/>
            <person name="Palmeiri A."/>
            <person name="Rouse G."/>
            <person name="Saenphimmachak C."/>
            <person name="Soell D."/>
            <person name="Van Dien S."/>
            <person name="Wang T."/>
            <person name="Whitman W.B."/>
            <person name="Xia Q."/>
            <person name="Zhang Y."/>
            <person name="Larimer F.W."/>
            <person name="Olson M.V."/>
            <person name="Leigh J.A."/>
        </authorList>
    </citation>
    <scope>NUCLEOTIDE SEQUENCE [LARGE SCALE GENOMIC DNA]</scope>
    <source>
        <strain>DSM 14266 / JCM 13030 / NBRC 101832 / S2 / LL</strain>
    </source>
</reference>
<reference key="2">
    <citation type="journal article" date="2010" name="Proc. Natl. Acad. Sci. U.S.A.">
        <title>Protein complexing in a methanogen suggests electron bifurcation and electron delivery from formate to heterodisulfide reductase.</title>
        <authorList>
            <person name="Costa K.C."/>
            <person name="Wong P.M."/>
            <person name="Wang T."/>
            <person name="Lie T.J."/>
            <person name="Dodsworth J.A."/>
            <person name="Swanson I."/>
            <person name="Burn J.A."/>
            <person name="Hackett M."/>
            <person name="Leigh J.A."/>
        </authorList>
    </citation>
    <scope>FUNCTION</scope>
    <scope>CATALYTIC ACTIVITY</scope>
    <scope>SUBUNIT</scope>
    <source>
        <strain>DSM 14266 / JCM 13030 / NBRC 101832 / S2 / LL</strain>
    </source>
</reference>
<reference key="3">
    <citation type="journal article" date="2013" name="J. Bacteriol.">
        <title>VhuD facilitates electron flow from H2 or formate to heterodisulfide reductase in Methanococcus maripaludis.</title>
        <authorList>
            <person name="Costa K.C."/>
            <person name="Lie T.J."/>
            <person name="Xia Q."/>
            <person name="Leigh J.A."/>
        </authorList>
    </citation>
    <scope>FUNCTION</scope>
    <scope>CATALYTIC ACTIVITY</scope>
    <scope>SUBUNIT</scope>
    <source>
        <strain>DSM 14266 / JCM 13030 / NBRC 101832 / S2 / LL</strain>
    </source>
</reference>
<name>HDRA_METMP</name>
<protein>
    <recommendedName>
        <fullName evidence="6">H(2)/formate:CoB-CoM heterodisulfide,ferredoxin reductase subunit A</fullName>
        <ecNumber evidence="5">1.8.98.5</ecNumber>
        <ecNumber evidence="4 5">1.8.98.6</ecNumber>
    </recommendedName>
    <alternativeName>
        <fullName evidence="6">CoB--CoM heterodisulfide reductase iron-sulfur subunit A</fullName>
    </alternativeName>
</protein>
<keyword id="KW-0004">4Fe-4S</keyword>
<keyword id="KW-0274">FAD</keyword>
<keyword id="KW-0285">Flavoprotein</keyword>
<keyword id="KW-0408">Iron</keyword>
<keyword id="KW-0411">Iron-sulfur</keyword>
<keyword id="KW-0479">Metal-binding</keyword>
<keyword id="KW-0484">Methanogenesis</keyword>
<keyword id="KW-0560">Oxidoreductase</keyword>
<keyword id="KW-1185">Reference proteome</keyword>
<keyword id="KW-0677">Repeat</keyword>
<keyword id="KW-0712">Selenocysteine</keyword>
<proteinExistence type="evidence at protein level"/>
<accession>Q6LWL2</accession>
<dbReference type="EC" id="1.8.98.5" evidence="5"/>
<dbReference type="EC" id="1.8.98.6" evidence="4 5"/>
<dbReference type="EMBL" id="BX950229">
    <property type="protein sequence ID" value="CAF31253.1"/>
    <property type="molecule type" value="Genomic_DNA"/>
</dbReference>
<dbReference type="RefSeq" id="WP_011171641.1">
    <property type="nucleotide sequence ID" value="NC_005791.1"/>
</dbReference>
<dbReference type="STRING" id="267377.MMP1697"/>
<dbReference type="GeneID" id="2762636"/>
<dbReference type="KEGG" id="mmp:MMP1697"/>
<dbReference type="PATRIC" id="fig|267377.15.peg.1739"/>
<dbReference type="eggNOG" id="arCOG02235">
    <property type="taxonomic scope" value="Archaea"/>
</dbReference>
<dbReference type="HOGENOM" id="CLU_020302_0_0_2"/>
<dbReference type="OrthoDB" id="32867at2157"/>
<dbReference type="BioCyc" id="MetaCyc:MONOMER-20165"/>
<dbReference type="BRENDA" id="1.8.98.1">
    <property type="organism ID" value="3262"/>
</dbReference>
<dbReference type="UniPathway" id="UPA00647">
    <property type="reaction ID" value="UER00700"/>
</dbReference>
<dbReference type="Proteomes" id="UP000000590">
    <property type="component" value="Chromosome"/>
</dbReference>
<dbReference type="GO" id="GO:0051539">
    <property type="term" value="F:4 iron, 4 sulfur cluster binding"/>
    <property type="evidence" value="ECO:0007669"/>
    <property type="project" value="UniProtKB-KW"/>
</dbReference>
<dbReference type="GO" id="GO:0046872">
    <property type="term" value="F:metal ion binding"/>
    <property type="evidence" value="ECO:0007669"/>
    <property type="project" value="UniProtKB-KW"/>
</dbReference>
<dbReference type="GO" id="GO:0016491">
    <property type="term" value="F:oxidoreductase activity"/>
    <property type="evidence" value="ECO:0007669"/>
    <property type="project" value="UniProtKB-KW"/>
</dbReference>
<dbReference type="GO" id="GO:0015948">
    <property type="term" value="P:methanogenesis"/>
    <property type="evidence" value="ECO:0007669"/>
    <property type="project" value="UniProtKB-KW"/>
</dbReference>
<dbReference type="Gene3D" id="3.30.70.20">
    <property type="match status" value="3"/>
</dbReference>
<dbReference type="Gene3D" id="3.50.50.60">
    <property type="entry name" value="FAD/NAD(P)-binding domain"/>
    <property type="match status" value="1"/>
</dbReference>
<dbReference type="InterPro" id="IPR017896">
    <property type="entry name" value="4Fe4S_Fe-S-bd"/>
</dbReference>
<dbReference type="InterPro" id="IPR017900">
    <property type="entry name" value="4Fe4S_Fe_S_CS"/>
</dbReference>
<dbReference type="InterPro" id="IPR036188">
    <property type="entry name" value="FAD/NAD-bd_sf"/>
</dbReference>
<dbReference type="InterPro" id="IPR039650">
    <property type="entry name" value="HdrA-like"/>
</dbReference>
<dbReference type="PANTHER" id="PTHR43498:SF1">
    <property type="entry name" value="COB--COM HETERODISULFIDE REDUCTASE IRON-SULFUR SUBUNIT A"/>
    <property type="match status" value="1"/>
</dbReference>
<dbReference type="PANTHER" id="PTHR43498">
    <property type="entry name" value="FERREDOXIN:COB-COM HETERODISULFIDE REDUCTASE SUBUNIT A"/>
    <property type="match status" value="1"/>
</dbReference>
<dbReference type="Pfam" id="PF00037">
    <property type="entry name" value="Fer4"/>
    <property type="match status" value="1"/>
</dbReference>
<dbReference type="Pfam" id="PF12838">
    <property type="entry name" value="Fer4_7"/>
    <property type="match status" value="1"/>
</dbReference>
<dbReference type="Pfam" id="PF13450">
    <property type="entry name" value="NAD_binding_8"/>
    <property type="match status" value="1"/>
</dbReference>
<dbReference type="SUPFAM" id="SSF54862">
    <property type="entry name" value="4Fe-4S ferredoxins"/>
    <property type="match status" value="1"/>
</dbReference>
<dbReference type="SUPFAM" id="SSF51905">
    <property type="entry name" value="FAD/NAD(P)-binding domain"/>
    <property type="match status" value="1"/>
</dbReference>
<dbReference type="PROSITE" id="PS00198">
    <property type="entry name" value="4FE4S_FER_1"/>
    <property type="match status" value="3"/>
</dbReference>
<dbReference type="PROSITE" id="PS51379">
    <property type="entry name" value="4FE4S_FER_2"/>
    <property type="match status" value="4"/>
</dbReference>
<gene>
    <name type="primary">hdrA</name>
    <name type="ordered locus">MMP1697</name>
</gene>
<evidence type="ECO:0000250" key="1">
    <source>
        <dbReference type="UniProtKB" id="Q8TM02"/>
    </source>
</evidence>
<evidence type="ECO:0000255" key="2"/>
<evidence type="ECO:0000255" key="3">
    <source>
        <dbReference type="PROSITE-ProRule" id="PRU00711"/>
    </source>
</evidence>
<evidence type="ECO:0000269" key="4">
    <source>
    </source>
</evidence>
<evidence type="ECO:0000269" key="5">
    <source>
    </source>
</evidence>
<evidence type="ECO:0000305" key="6"/>